<accession>Q44482</accession>
<accession>Q3M592</accession>
<organism>
    <name type="scientific">Trichormus variabilis (strain ATCC 29413 / PCC 7937)</name>
    <name type="common">Anabaena variabilis</name>
    <dbReference type="NCBI Taxonomy" id="240292"/>
    <lineage>
        <taxon>Bacteria</taxon>
        <taxon>Bacillati</taxon>
        <taxon>Cyanobacteriota</taxon>
        <taxon>Cyanophyceae</taxon>
        <taxon>Nostocales</taxon>
        <taxon>Nostocaceae</taxon>
        <taxon>Trichormus</taxon>
    </lineage>
</organism>
<evidence type="ECO:0000250" key="1">
    <source>
        <dbReference type="UniProtKB" id="O29689"/>
    </source>
</evidence>
<evidence type="ECO:0000250" key="2">
    <source>
        <dbReference type="UniProtKB" id="P05341"/>
    </source>
</evidence>
<evidence type="ECO:0000250" key="3">
    <source>
        <dbReference type="UniProtKB" id="P0A6B9"/>
    </source>
</evidence>
<evidence type="ECO:0000269" key="4">
    <source>
    </source>
</evidence>
<evidence type="ECO:0000305" key="5"/>
<feature type="chain" id="PRO_0000150249" description="Cysteine desulfurase 2">
    <location>
        <begin position="1"/>
        <end position="398"/>
    </location>
</feature>
<feature type="active site" description="Cysteine persulfide intermediate" evidence="2">
    <location>
        <position position="323"/>
    </location>
</feature>
<feature type="binding site" evidence="3">
    <location>
        <begin position="71"/>
        <end position="72"/>
    </location>
    <ligand>
        <name>pyridoxal 5'-phosphate</name>
        <dbReference type="ChEBI" id="CHEBI:597326"/>
    </ligand>
</feature>
<feature type="binding site" evidence="1">
    <location>
        <position position="150"/>
    </location>
    <ligand>
        <name>pyridoxal 5'-phosphate</name>
        <dbReference type="ChEBI" id="CHEBI:597326"/>
    </ligand>
</feature>
<feature type="binding site" evidence="3">
    <location>
        <position position="178"/>
    </location>
    <ligand>
        <name>pyridoxal 5'-phosphate</name>
        <dbReference type="ChEBI" id="CHEBI:597326"/>
    </ligand>
</feature>
<feature type="binding site" evidence="3">
    <location>
        <begin position="198"/>
        <end position="200"/>
    </location>
    <ligand>
        <name>pyridoxal 5'-phosphate</name>
        <dbReference type="ChEBI" id="CHEBI:597326"/>
    </ligand>
</feature>
<feature type="binding site" evidence="3">
    <location>
        <position position="236"/>
    </location>
    <ligand>
        <name>pyridoxal 5'-phosphate</name>
        <dbReference type="ChEBI" id="CHEBI:597326"/>
    </ligand>
</feature>
<feature type="binding site" description="via persulfide group" evidence="1">
    <location>
        <position position="323"/>
    </location>
    <ligand>
        <name>[2Fe-2S] cluster</name>
        <dbReference type="ChEBI" id="CHEBI:190135"/>
    </ligand>
</feature>
<feature type="modified residue" description="N6-(pyridoxal phosphate)lysine" evidence="3">
    <location>
        <position position="201"/>
    </location>
</feature>
<feature type="sequence conflict" description="In Ref. 1; AAA93018." evidence="5" ref="1">
    <original>SNT</original>
    <variation>PTP</variation>
    <location>
        <begin position="291"/>
        <end position="293"/>
    </location>
</feature>
<reference key="1">
    <citation type="journal article" date="1995" name="Proc. Natl. Acad. Sci. U.S.A.">
        <title>A second nitrogenase in vegetative cells of a heterocyst-forming cyanobacterium.</title>
        <authorList>
            <person name="Thiel T."/>
            <person name="Lyons E.M."/>
            <person name="Erker J.C."/>
            <person name="Ernst A."/>
        </authorList>
    </citation>
    <scope>NUCLEOTIDE SEQUENCE [GENOMIC DNA]</scope>
    <scope>FUNCTION</scope>
</reference>
<reference key="2">
    <citation type="journal article" date="2014" name="Stand. Genomic Sci.">
        <title>Complete genome sequence of Anabaena variabilis ATCC 29413.</title>
        <authorList>
            <person name="Thiel T."/>
            <person name="Pratte B.S."/>
            <person name="Zhong J."/>
            <person name="Goodwin L."/>
            <person name="Copeland A."/>
            <person name="Lucas S."/>
            <person name="Han C."/>
            <person name="Pitluck S."/>
            <person name="Land M.L."/>
            <person name="Kyrpides N.C."/>
            <person name="Woyke T."/>
        </authorList>
    </citation>
    <scope>NUCLEOTIDE SEQUENCE [LARGE SCALE GENOMIC DNA]</scope>
    <source>
        <strain>ATCC 29413 / PCC 7937</strain>
    </source>
</reference>
<gene>
    <name evidence="2" type="primary">nifS2</name>
    <name type="ordered locus">Ava_4245</name>
</gene>
<protein>
    <recommendedName>
        <fullName evidence="2">Cysteine desulfurase 2</fullName>
        <ecNumber evidence="2">2.8.1.7</ecNumber>
    </recommendedName>
    <alternativeName>
        <fullName evidence="2">Nitrogenase metalloclusters biosynthesis protein nifS2</fullName>
    </alternativeName>
</protein>
<dbReference type="EC" id="2.8.1.7" evidence="2"/>
<dbReference type="EMBL" id="U49859">
    <property type="protein sequence ID" value="AAA93018.1"/>
    <property type="molecule type" value="Genomic_DNA"/>
</dbReference>
<dbReference type="EMBL" id="CP000117">
    <property type="protein sequence ID" value="ABA23844.1"/>
    <property type="molecule type" value="Genomic_DNA"/>
</dbReference>
<dbReference type="SMR" id="Q44482"/>
<dbReference type="STRING" id="240292.Ava_4245"/>
<dbReference type="KEGG" id="ava:Ava_4245"/>
<dbReference type="eggNOG" id="COG1104">
    <property type="taxonomic scope" value="Bacteria"/>
</dbReference>
<dbReference type="HOGENOM" id="CLU_003433_0_0_3"/>
<dbReference type="Proteomes" id="UP000002533">
    <property type="component" value="Chromosome"/>
</dbReference>
<dbReference type="GO" id="GO:0031071">
    <property type="term" value="F:cysteine desulfurase activity"/>
    <property type="evidence" value="ECO:0007669"/>
    <property type="project" value="UniProtKB-EC"/>
</dbReference>
<dbReference type="GO" id="GO:0051536">
    <property type="term" value="F:iron-sulfur cluster binding"/>
    <property type="evidence" value="ECO:0007669"/>
    <property type="project" value="UniProtKB-KW"/>
</dbReference>
<dbReference type="GO" id="GO:0046872">
    <property type="term" value="F:metal ion binding"/>
    <property type="evidence" value="ECO:0007669"/>
    <property type="project" value="UniProtKB-KW"/>
</dbReference>
<dbReference type="GO" id="GO:0030170">
    <property type="term" value="F:pyridoxal phosphate binding"/>
    <property type="evidence" value="ECO:0007669"/>
    <property type="project" value="InterPro"/>
</dbReference>
<dbReference type="GO" id="GO:0006520">
    <property type="term" value="P:amino acid metabolic process"/>
    <property type="evidence" value="ECO:0007669"/>
    <property type="project" value="InterPro"/>
</dbReference>
<dbReference type="GO" id="GO:0009399">
    <property type="term" value="P:nitrogen fixation"/>
    <property type="evidence" value="ECO:0007669"/>
    <property type="project" value="UniProtKB-KW"/>
</dbReference>
<dbReference type="FunFam" id="3.40.640.10:FF:000084">
    <property type="entry name" value="IscS-like cysteine desulfurase"/>
    <property type="match status" value="1"/>
</dbReference>
<dbReference type="Gene3D" id="1.10.260.50">
    <property type="match status" value="1"/>
</dbReference>
<dbReference type="Gene3D" id="3.90.1150.10">
    <property type="entry name" value="Aspartate Aminotransferase, domain 1"/>
    <property type="match status" value="1"/>
</dbReference>
<dbReference type="Gene3D" id="3.40.640.10">
    <property type="entry name" value="Type I PLP-dependent aspartate aminotransferase-like (Major domain)"/>
    <property type="match status" value="1"/>
</dbReference>
<dbReference type="InterPro" id="IPR000192">
    <property type="entry name" value="Aminotrans_V_dom"/>
</dbReference>
<dbReference type="InterPro" id="IPR020578">
    <property type="entry name" value="Aminotrans_V_PyrdxlP_BS"/>
</dbReference>
<dbReference type="InterPro" id="IPR017772">
    <property type="entry name" value="Cys_deSase_NifS_bac/arc"/>
</dbReference>
<dbReference type="InterPro" id="IPR016454">
    <property type="entry name" value="Cysteine_dSase"/>
</dbReference>
<dbReference type="InterPro" id="IPR015424">
    <property type="entry name" value="PyrdxlP-dep_Trfase"/>
</dbReference>
<dbReference type="InterPro" id="IPR015421">
    <property type="entry name" value="PyrdxlP-dep_Trfase_major"/>
</dbReference>
<dbReference type="InterPro" id="IPR015422">
    <property type="entry name" value="PyrdxlP-dep_Trfase_small"/>
</dbReference>
<dbReference type="NCBIfam" id="TIGR03402">
    <property type="entry name" value="FeS_nifS"/>
    <property type="match status" value="1"/>
</dbReference>
<dbReference type="NCBIfam" id="NF002806">
    <property type="entry name" value="PRK02948.1"/>
    <property type="match status" value="1"/>
</dbReference>
<dbReference type="PANTHER" id="PTHR11601:SF34">
    <property type="entry name" value="CYSTEINE DESULFURASE"/>
    <property type="match status" value="1"/>
</dbReference>
<dbReference type="PANTHER" id="PTHR11601">
    <property type="entry name" value="CYSTEINE DESULFURYLASE FAMILY MEMBER"/>
    <property type="match status" value="1"/>
</dbReference>
<dbReference type="Pfam" id="PF00266">
    <property type="entry name" value="Aminotran_5"/>
    <property type="match status" value="1"/>
</dbReference>
<dbReference type="PIRSF" id="PIRSF005572">
    <property type="entry name" value="NifS"/>
    <property type="match status" value="1"/>
</dbReference>
<dbReference type="SUPFAM" id="SSF53383">
    <property type="entry name" value="PLP-dependent transferases"/>
    <property type="match status" value="1"/>
</dbReference>
<dbReference type="PROSITE" id="PS00595">
    <property type="entry name" value="AA_TRANSFER_CLASS_5"/>
    <property type="match status" value="1"/>
</dbReference>
<name>NIFS2_TRIV2</name>
<proteinExistence type="inferred from homology"/>
<keyword id="KW-0408">Iron</keyword>
<keyword id="KW-0411">Iron-sulfur</keyword>
<keyword id="KW-0479">Metal-binding</keyword>
<keyword id="KW-0535">Nitrogen fixation</keyword>
<keyword id="KW-0663">Pyridoxal phosphate</keyword>
<keyword id="KW-0808">Transferase</keyword>
<comment type="function">
    <text evidence="4">Catalyzes the removal of elemental sulfur atoms from cysteine to produce alanine. Seems to participate in the biosynthesis of the nitrogenase metalloclusters by providing the inorganic sulfur required for the Fe-S core formation.</text>
</comment>
<comment type="catalytic activity">
    <reaction evidence="2">
        <text>(sulfur carrier)-H + L-cysteine = (sulfur carrier)-SH + L-alanine</text>
        <dbReference type="Rhea" id="RHEA:43892"/>
        <dbReference type="Rhea" id="RHEA-COMP:14737"/>
        <dbReference type="Rhea" id="RHEA-COMP:14739"/>
        <dbReference type="ChEBI" id="CHEBI:29917"/>
        <dbReference type="ChEBI" id="CHEBI:35235"/>
        <dbReference type="ChEBI" id="CHEBI:57972"/>
        <dbReference type="ChEBI" id="CHEBI:64428"/>
        <dbReference type="EC" id="2.8.1.7"/>
    </reaction>
</comment>
<comment type="cofactor">
    <cofactor evidence="2">
        <name>pyridoxal 5'-phosphate</name>
        <dbReference type="ChEBI" id="CHEBI:597326"/>
    </cofactor>
</comment>
<comment type="subunit">
    <text evidence="2">Homodimer.</text>
</comment>
<comment type="miscellaneous">
    <text evidence="5">Belongs to NIF2 gene cluster which is expressed in vegetative cells and heterocysts under anaerobic conditions only. This second system appears to serve as an auxiliary system that does not suppress expression of the first system.</text>
</comment>
<comment type="similarity">
    <text evidence="5">Belongs to the class-V pyridoxal-phosphate-dependent aminotransferase family. NifS/IscS subfamily.</text>
</comment>
<sequence>MSVIYLDNNATTQVDAEVLAAMLPYLTEFYGNPSSMHTFGGQVGKAVQQARGQVAFLLGAEESEIIFTSCGTEGNNAAIKAALAAQPEKRHIITTQVEHAAIINVCKQLEKQGYKVTYLSVDSQGQIDLLELEAALTGDTALVSTMYANNETGVVFPIEQIGLRAKDAGAIFHVDAVQAVGKVPLNLKTSSIDMLTLSGHKLHAPKGIGALYIRRGVRFRPLLVGGHQERGRRAGTENVPGMIALGKAAELAQIHLKDVKREKALRDRLEQGLLSAIPNTEVNGHPTSRLSNTTNIGFKYIEGEAILLSLNKYGICASSGSACTSGSLESSHVLRAMGLPYTILHGSIRFSLSRYTTEAEIDKVLQLMPPIVERLRAISPFSNDQADWLQGREEALAH</sequence>